<evidence type="ECO:0000250" key="1">
    <source>
        <dbReference type="UniProtKB" id="Q6QT07"/>
    </source>
</evidence>
<evidence type="ECO:0000250" key="2">
    <source>
        <dbReference type="UniProtKB" id="Q99NF1"/>
    </source>
</evidence>
<evidence type="ECO:0000250" key="3">
    <source>
        <dbReference type="UniProtKB" id="Q9BYV7"/>
    </source>
</evidence>
<evidence type="ECO:0000250" key="4">
    <source>
        <dbReference type="UniProtKB" id="Q9JJS6"/>
    </source>
</evidence>
<evidence type="ECO:0000305" key="5"/>
<dbReference type="EC" id="1.13.11.-" evidence="2"/>
<dbReference type="EC" id="1.13.11.71" evidence="2"/>
<dbReference type="EMBL" id="AB097557">
    <property type="protein sequence ID" value="BAC41782.1"/>
    <property type="status" value="ALT_INIT"/>
    <property type="molecule type" value="mRNA"/>
</dbReference>
<dbReference type="RefSeq" id="NP_001271880.1">
    <property type="nucleotide sequence ID" value="NM_001284951.1"/>
</dbReference>
<dbReference type="SMR" id="Q8HXG8"/>
<dbReference type="STRING" id="9541.ENSMFAP00000044741"/>
<dbReference type="eggNOG" id="KOG1285">
    <property type="taxonomic scope" value="Eukaryota"/>
</dbReference>
<dbReference type="Proteomes" id="UP000233100">
    <property type="component" value="Unplaced"/>
</dbReference>
<dbReference type="GO" id="GO:0005739">
    <property type="term" value="C:mitochondrion"/>
    <property type="evidence" value="ECO:0000250"/>
    <property type="project" value="UniProtKB"/>
</dbReference>
<dbReference type="GO" id="GO:0010437">
    <property type="term" value="F:9,10 (9', 10')-carotenoid-cleaving dioxygenase activity"/>
    <property type="evidence" value="ECO:0000250"/>
    <property type="project" value="UniProtKB"/>
</dbReference>
<dbReference type="GO" id="GO:0102076">
    <property type="term" value="F:beta,beta-carotene-9',10'-cleaving oxygenase activity"/>
    <property type="evidence" value="ECO:0000250"/>
    <property type="project" value="UniProtKB"/>
</dbReference>
<dbReference type="GO" id="GO:0003834">
    <property type="term" value="F:beta-carotene 15,15'-dioxygenase activity"/>
    <property type="evidence" value="ECO:0007669"/>
    <property type="project" value="TreeGrafter"/>
</dbReference>
<dbReference type="GO" id="GO:0046872">
    <property type="term" value="F:metal ion binding"/>
    <property type="evidence" value="ECO:0007669"/>
    <property type="project" value="UniProtKB-KW"/>
</dbReference>
<dbReference type="GO" id="GO:0016702">
    <property type="term" value="F:oxidoreductase activity, acting on single donors with incorporation of molecular oxygen, incorporation of two atoms of oxygen"/>
    <property type="evidence" value="ECO:0000250"/>
    <property type="project" value="UniProtKB"/>
</dbReference>
<dbReference type="GO" id="GO:0016121">
    <property type="term" value="P:carotene catabolic process"/>
    <property type="evidence" value="ECO:0000250"/>
    <property type="project" value="UniProtKB"/>
</dbReference>
<dbReference type="GO" id="GO:0016119">
    <property type="term" value="P:carotene metabolic process"/>
    <property type="evidence" value="ECO:0000250"/>
    <property type="project" value="UniProtKB"/>
</dbReference>
<dbReference type="GO" id="GO:0062172">
    <property type="term" value="P:lutein catabolic process"/>
    <property type="evidence" value="ECO:0000250"/>
    <property type="project" value="UniProtKB"/>
</dbReference>
<dbReference type="GO" id="GO:1901176">
    <property type="term" value="P:lycopene catabolic process"/>
    <property type="evidence" value="ECO:0000250"/>
    <property type="project" value="UniProtKB"/>
</dbReference>
<dbReference type="GO" id="GO:0042574">
    <property type="term" value="P:retinal metabolic process"/>
    <property type="evidence" value="ECO:0007669"/>
    <property type="project" value="TreeGrafter"/>
</dbReference>
<dbReference type="GO" id="GO:0016124">
    <property type="term" value="P:xanthophyll catabolic process"/>
    <property type="evidence" value="ECO:0000250"/>
    <property type="project" value="UniProtKB"/>
</dbReference>
<dbReference type="GO" id="GO:1901826">
    <property type="term" value="P:zeaxanthin catabolic process"/>
    <property type="evidence" value="ECO:0000250"/>
    <property type="project" value="UniProtKB"/>
</dbReference>
<dbReference type="InterPro" id="IPR004294">
    <property type="entry name" value="Carotenoid_Oase"/>
</dbReference>
<dbReference type="PANTHER" id="PTHR10543">
    <property type="entry name" value="BETA-CAROTENE DIOXYGENASE"/>
    <property type="match status" value="1"/>
</dbReference>
<dbReference type="PANTHER" id="PTHR10543:SF122">
    <property type="entry name" value="CAROTENOID-CLEAVING DIOXYGENASE, MITOCHONDRIAL"/>
    <property type="match status" value="1"/>
</dbReference>
<dbReference type="Pfam" id="PF03055">
    <property type="entry name" value="RPE65"/>
    <property type="match status" value="1"/>
</dbReference>
<accession>Q8HXG8</accession>
<sequence length="556" mass="62966">MVHPLPVFKRYTGNTHQKKAIFGQCRGLPCVAPLLTTVEEAPRGISARVWGHFPKWLNGSLLRIGPGKFEFGKDKYNHWFDGMALLHQFRMAKGTVTYRSKFLQSDTYKANSAKNRIVMSEFGTLATPDPCKNVFERFMSRFELPGKAAAMTDNTNVNYVRYKGDYYLCTETNFMNKVDIETLEKTEKVDWSKFIAVNGATAHPHYDPDGTAYNMGNSFGPFGFSYKVIRVPPEKVDLEETTHGAQVICSIAPTEKGKPSYYHSFGMTRNYIIFIEQPLKMNLWKIATSKIRGKAFSDGISWEPQCNTRFHVVDKHTGQLLPGRYYSKPFVAFHHINAFEDQGCVIIDLCCQDNGRILEVYQLQNLRKAGEELDQVYNSAGRSFPRRFVLPLNVSLNAPEGDNLSPLSYTSASAVKQADGTIWCSHENLHQEDLEKEGGIEFPQIYYGQFSGKKYRFFYGCGFRHLVGDSLIKVDVVNKTLKVWREDGFYPSEPVFVPVPGTNEEDGGVILSVVITPNQNESNFLLVLDAKNFEELGRAEVPVQMPYGFHGTFIPI</sequence>
<name>BCDO2_MACFA</name>
<reference key="1">
    <citation type="submission" date="2002-12" db="EMBL/GenBank/DDBJ databases">
        <title>Isolation of full-length cDNA clones from macaque brain cDNA libraries.</title>
        <authorList>
            <person name="Osada N."/>
            <person name="Hida M."/>
            <person name="Kusuda J."/>
            <person name="Tanuma R."/>
            <person name="Iseki K."/>
            <person name="Hirata M."/>
            <person name="Suto Y."/>
            <person name="Hirai M."/>
            <person name="Terao K."/>
            <person name="Suzuki Y."/>
            <person name="Sugano S."/>
            <person name="Hashimoto K."/>
        </authorList>
    </citation>
    <scope>NUCLEOTIDE SEQUENCE [LARGE SCALE MRNA]</scope>
    <source>
        <tissue>Medulla oblongata</tissue>
    </source>
</reference>
<protein>
    <recommendedName>
        <fullName evidence="2">Carotenoid-cleaving dioxygenase, mitochondrial</fullName>
        <ecNumber evidence="2">1.13.11.-</ecNumber>
        <ecNumber evidence="2">1.13.11.71</ecNumber>
    </recommendedName>
    <alternativeName>
        <fullName evidence="3">Beta-carotene dioxygenase 2</fullName>
    </alternativeName>
</protein>
<gene>
    <name evidence="3" type="primary">BCO2</name>
    <name type="ORF">QmoA-15570</name>
</gene>
<comment type="function">
    <text evidence="2">Broad specificity mitochondrial dioxygenase that mediates the asymmetric oxidative cleavage of carotenoids. Cleaves carotenes (pure hydrocarbon carotenoids) such as all-trans-beta-carotene and lycopene as well as xanthophylls (oxygenated carotenoids) such as zeaxanthin, lutein and beta-cryptoxanthin at both the 9,10 and the 9',10' carbon-carbon double bond. Through its function in carotenoids metabolism regulates oxidative stress and the production of important signaling molecules.</text>
</comment>
<comment type="catalytic activity">
    <reaction evidence="2">
        <text>all-trans-beta-carotene + O2 = beta-ionone + all-trans-10'-apo-beta-carotenal</text>
        <dbReference type="Rhea" id="RHEA:26389"/>
        <dbReference type="ChEBI" id="CHEBI:15379"/>
        <dbReference type="ChEBI" id="CHEBI:17579"/>
        <dbReference type="ChEBI" id="CHEBI:32325"/>
        <dbReference type="ChEBI" id="CHEBI:53153"/>
        <dbReference type="EC" id="1.13.11.71"/>
    </reaction>
    <physiologicalReaction direction="left-to-right" evidence="2">
        <dbReference type="Rhea" id="RHEA:26390"/>
    </physiologicalReaction>
</comment>
<comment type="catalytic activity">
    <reaction evidence="1">
        <text>5-cis-lycopene + O2 = 5-cis-10'-apo-lycopenal + (3E,5E)-6,10-dimethylundeca-3,5,9-trien-2-one</text>
        <dbReference type="Rhea" id="RHEA:68444"/>
        <dbReference type="ChEBI" id="CHEBI:15379"/>
        <dbReference type="ChEBI" id="CHEBI:67207"/>
        <dbReference type="ChEBI" id="CHEBI:177905"/>
        <dbReference type="ChEBI" id="CHEBI:177906"/>
    </reaction>
    <physiologicalReaction direction="left-to-right" evidence="1">
        <dbReference type="Rhea" id="RHEA:68445"/>
    </physiologicalReaction>
</comment>
<comment type="catalytic activity">
    <reaction evidence="1">
        <text>13-cis-lycopene + O2 = 13-cis-10'-apo-lycopenal + (3E,5E)-6,10-dimethylundeca-3,5,9-trien-2-one</text>
        <dbReference type="Rhea" id="RHEA:68448"/>
        <dbReference type="ChEBI" id="CHEBI:15379"/>
        <dbReference type="ChEBI" id="CHEBI:67207"/>
        <dbReference type="ChEBI" id="CHEBI:177907"/>
        <dbReference type="ChEBI" id="CHEBI:177908"/>
    </reaction>
    <physiologicalReaction direction="left-to-right" evidence="1">
        <dbReference type="Rhea" id="RHEA:68449"/>
    </physiologicalReaction>
</comment>
<comment type="catalytic activity">
    <reaction evidence="2">
        <text>lutein + O2 = (3R,6R)-hydroxy-alpha-ionone + (3R)-3-hydroxy-10'-apo-beta-carotenal</text>
        <dbReference type="Rhea" id="RHEA:68428"/>
        <dbReference type="ChEBI" id="CHEBI:15379"/>
        <dbReference type="ChEBI" id="CHEBI:28838"/>
        <dbReference type="ChEBI" id="CHEBI:177902"/>
        <dbReference type="ChEBI" id="CHEBI:177904"/>
    </reaction>
    <physiologicalReaction direction="left-to-right" evidence="2">
        <dbReference type="Rhea" id="RHEA:68429"/>
    </physiologicalReaction>
</comment>
<comment type="catalytic activity">
    <reaction evidence="2">
        <text>lutein + O2 = (3R,6R)-3-hydroxy-10'-apo-alpha-carotenal + (3R)-hydroxy-beta-ionone</text>
        <dbReference type="Rhea" id="RHEA:68432"/>
        <dbReference type="ChEBI" id="CHEBI:15379"/>
        <dbReference type="ChEBI" id="CHEBI:28838"/>
        <dbReference type="ChEBI" id="CHEBI:53173"/>
        <dbReference type="ChEBI" id="CHEBI:177903"/>
    </reaction>
    <physiologicalReaction direction="left-to-right" evidence="2">
        <dbReference type="Rhea" id="RHEA:68433"/>
    </physiologicalReaction>
</comment>
<comment type="catalytic activity">
    <reaction evidence="2">
        <text>all-trans-zeaxanthin + 2 O2 = 4,9-dimethyldodeca-2,4,6,8,10-pentaenedial + 2 (3R)-hydroxy-beta-ionone</text>
        <dbReference type="Rhea" id="RHEA:26393"/>
        <dbReference type="ChEBI" id="CHEBI:15379"/>
        <dbReference type="ChEBI" id="CHEBI:27547"/>
        <dbReference type="ChEBI" id="CHEBI:53171"/>
        <dbReference type="ChEBI" id="CHEBI:53173"/>
    </reaction>
    <physiologicalReaction direction="left-to-right" evidence="2">
        <dbReference type="Rhea" id="RHEA:26394"/>
    </physiologicalReaction>
</comment>
<comment type="catalytic activity">
    <reaction evidence="2">
        <text>all-trans-zeaxanthin + O2 = (3R)-3-hydroxy-10'-apo-beta-carotenal + (3R)-hydroxy-beta-ionone</text>
        <dbReference type="Rhea" id="RHEA:68104"/>
        <dbReference type="ChEBI" id="CHEBI:15379"/>
        <dbReference type="ChEBI" id="CHEBI:27547"/>
        <dbReference type="ChEBI" id="CHEBI:53173"/>
        <dbReference type="ChEBI" id="CHEBI:177902"/>
    </reaction>
    <physiologicalReaction direction="left-to-right" evidence="2">
        <dbReference type="Rhea" id="RHEA:68105"/>
    </physiologicalReaction>
</comment>
<comment type="catalytic activity">
    <reaction evidence="2">
        <text>beta-cryptoxanthin + O2 = all-trans-10'-apo-beta-carotenal + (3R)-hydroxy-beta-ionone</text>
        <dbReference type="Rhea" id="RHEA:68440"/>
        <dbReference type="ChEBI" id="CHEBI:10362"/>
        <dbReference type="ChEBI" id="CHEBI:15379"/>
        <dbReference type="ChEBI" id="CHEBI:53153"/>
        <dbReference type="ChEBI" id="CHEBI:53173"/>
    </reaction>
    <physiologicalReaction direction="left-to-right" evidence="2">
        <dbReference type="Rhea" id="RHEA:68441"/>
    </physiologicalReaction>
</comment>
<comment type="catalytic activity">
    <reaction evidence="2">
        <text>all-trans-10'-apo-beta-carotenal + O2 = beta-ionone + 4,9-dimethyldodeca-2,4,6,8,10-pentaenedial</text>
        <dbReference type="Rhea" id="RHEA:68452"/>
        <dbReference type="ChEBI" id="CHEBI:15379"/>
        <dbReference type="ChEBI" id="CHEBI:32325"/>
        <dbReference type="ChEBI" id="CHEBI:53153"/>
        <dbReference type="ChEBI" id="CHEBI:53171"/>
    </reaction>
    <physiologicalReaction direction="left-to-right" evidence="2">
        <dbReference type="Rhea" id="RHEA:68453"/>
    </physiologicalReaction>
</comment>
<comment type="catalytic activity">
    <reaction evidence="2">
        <text>(3R)-3-hydroxy-10'-apo-beta-carotenal + O2 = 4,9-dimethyldodeca-2,4,6,8,10-pentaenedial + (3R)-hydroxy-beta-ionone</text>
        <dbReference type="Rhea" id="RHEA:68424"/>
        <dbReference type="ChEBI" id="CHEBI:15379"/>
        <dbReference type="ChEBI" id="CHEBI:53171"/>
        <dbReference type="ChEBI" id="CHEBI:53173"/>
        <dbReference type="ChEBI" id="CHEBI:177902"/>
    </reaction>
    <physiologicalReaction direction="left-to-right" evidence="2">
        <dbReference type="Rhea" id="RHEA:68425"/>
    </physiologicalReaction>
</comment>
<comment type="catalytic activity">
    <reaction evidence="2">
        <text>(3R,6R)-3-hydroxy-10'-apo-alpha-carotenal + O2 = (3R,6R)-hydroxy-alpha-ionone + 4,9-dimethyldodeca-2,4,6,8,10-pentaenedial</text>
        <dbReference type="Rhea" id="RHEA:68436"/>
        <dbReference type="ChEBI" id="CHEBI:15379"/>
        <dbReference type="ChEBI" id="CHEBI:53171"/>
        <dbReference type="ChEBI" id="CHEBI:177903"/>
        <dbReference type="ChEBI" id="CHEBI:177904"/>
    </reaction>
    <physiologicalReaction direction="left-to-right" evidence="2">
        <dbReference type="Rhea" id="RHEA:68437"/>
    </physiologicalReaction>
</comment>
<comment type="cofactor">
    <cofactor evidence="1">
        <name>Fe(2+)</name>
        <dbReference type="ChEBI" id="CHEBI:29033"/>
    </cofactor>
    <text evidence="1">Binds 1 Fe(2+) ion per subunit.</text>
</comment>
<comment type="subcellular location">
    <subcellularLocation>
        <location evidence="2">Mitochondrion</location>
    </subcellularLocation>
</comment>
<comment type="similarity">
    <text evidence="5">Belongs to the carotenoid oxygenase family.</text>
</comment>
<comment type="sequence caution" evidence="5">
    <conflict type="erroneous initiation">
        <sequence resource="EMBL-CDS" id="BAC41782"/>
    </conflict>
</comment>
<organism>
    <name type="scientific">Macaca fascicularis</name>
    <name type="common">Crab-eating macaque</name>
    <name type="synonym">Cynomolgus monkey</name>
    <dbReference type="NCBI Taxonomy" id="9541"/>
    <lineage>
        <taxon>Eukaryota</taxon>
        <taxon>Metazoa</taxon>
        <taxon>Chordata</taxon>
        <taxon>Craniata</taxon>
        <taxon>Vertebrata</taxon>
        <taxon>Euteleostomi</taxon>
        <taxon>Mammalia</taxon>
        <taxon>Eutheria</taxon>
        <taxon>Euarchontoglires</taxon>
        <taxon>Primates</taxon>
        <taxon>Haplorrhini</taxon>
        <taxon>Catarrhini</taxon>
        <taxon>Cercopithecidae</taxon>
        <taxon>Cercopithecinae</taxon>
        <taxon>Macaca</taxon>
    </lineage>
</organism>
<proteinExistence type="evidence at transcript level"/>
<feature type="chain" id="PRO_0000143938" description="Carotenoid-cleaving dioxygenase, mitochondrial">
    <location>
        <begin position="1"/>
        <end position="556"/>
    </location>
</feature>
<feature type="binding site" evidence="4">
    <location>
        <position position="203"/>
    </location>
    <ligand>
        <name>Fe cation</name>
        <dbReference type="ChEBI" id="CHEBI:24875"/>
        <note>catalytic</note>
    </ligand>
</feature>
<feature type="binding site" evidence="4">
    <location>
        <position position="263"/>
    </location>
    <ligand>
        <name>Fe cation</name>
        <dbReference type="ChEBI" id="CHEBI:24875"/>
        <note>catalytic</note>
    </ligand>
</feature>
<feature type="binding site" evidence="4">
    <location>
        <position position="334"/>
    </location>
    <ligand>
        <name>Fe cation</name>
        <dbReference type="ChEBI" id="CHEBI:24875"/>
        <note>catalytic</note>
    </ligand>
</feature>
<feature type="binding site" evidence="4">
    <location>
        <position position="550"/>
    </location>
    <ligand>
        <name>Fe cation</name>
        <dbReference type="ChEBI" id="CHEBI:24875"/>
        <note>catalytic</note>
    </ligand>
</feature>
<keyword id="KW-0223">Dioxygenase</keyword>
<keyword id="KW-0408">Iron</keyword>
<keyword id="KW-0443">Lipid metabolism</keyword>
<keyword id="KW-0479">Metal-binding</keyword>
<keyword id="KW-0496">Mitochondrion</keyword>
<keyword id="KW-0560">Oxidoreductase</keyword>
<keyword id="KW-1185">Reference proteome</keyword>